<evidence type="ECO:0000255" key="1">
    <source>
        <dbReference type="HAMAP-Rule" id="MF_00354"/>
    </source>
</evidence>
<protein>
    <recommendedName>
        <fullName evidence="1">Isopentenyl-diphosphate delta-isomerase</fullName>
        <shortName evidence="1">IPP isomerase</shortName>
        <ecNumber evidence="1">5.3.3.2</ecNumber>
    </recommendedName>
    <alternativeName>
        <fullName evidence="1">Isopentenyl diphosphate:dimethylallyl diphosphate isomerase</fullName>
    </alternativeName>
    <alternativeName>
        <fullName evidence="1">Isopentenyl pyrophosphate isomerase</fullName>
    </alternativeName>
    <alternativeName>
        <fullName evidence="1">Type 2 isopentenyl diphosphate isomerase</fullName>
        <shortName evidence="1">IDI-2</shortName>
    </alternativeName>
</protein>
<comment type="function">
    <text evidence="1">Involved in the biosynthesis of isoprenoids. Catalyzes the 1,3-allylic rearrangement of the homoallylic substrate isopentenyl (IPP) to its allylic isomer, dimethylallyl diphosphate (DMAPP).</text>
</comment>
<comment type="catalytic activity">
    <reaction evidence="1">
        <text>isopentenyl diphosphate = dimethylallyl diphosphate</text>
        <dbReference type="Rhea" id="RHEA:23284"/>
        <dbReference type="ChEBI" id="CHEBI:57623"/>
        <dbReference type="ChEBI" id="CHEBI:128769"/>
        <dbReference type="EC" id="5.3.3.2"/>
    </reaction>
</comment>
<comment type="cofactor">
    <cofactor evidence="1">
        <name>FMN</name>
        <dbReference type="ChEBI" id="CHEBI:58210"/>
    </cofactor>
</comment>
<comment type="cofactor">
    <cofactor evidence="1">
        <name>NADPH</name>
        <dbReference type="ChEBI" id="CHEBI:57783"/>
    </cofactor>
</comment>
<comment type="cofactor">
    <cofactor evidence="1">
        <name>Mg(2+)</name>
        <dbReference type="ChEBI" id="CHEBI:18420"/>
    </cofactor>
</comment>
<comment type="subunit">
    <text evidence="1">Homooctamer. Dimer of tetramers.</text>
</comment>
<comment type="subcellular location">
    <subcellularLocation>
        <location evidence="1">Cytoplasm</location>
    </subcellularLocation>
</comment>
<comment type="similarity">
    <text evidence="1">Belongs to the IPP isomerase type 2 family.</text>
</comment>
<dbReference type="EC" id="5.3.3.2" evidence="1"/>
<dbReference type="EMBL" id="CP000423">
    <property type="protein sequence ID" value="ABJ70269.1"/>
    <property type="molecule type" value="Genomic_DNA"/>
</dbReference>
<dbReference type="RefSeq" id="WP_003594554.1">
    <property type="nucleotide sequence ID" value="NC_008526.1"/>
</dbReference>
<dbReference type="RefSeq" id="YP_806711.1">
    <property type="nucleotide sequence ID" value="NC_008526.1"/>
</dbReference>
<dbReference type="SMR" id="Q038V3"/>
<dbReference type="STRING" id="321967.LSEI_1493"/>
<dbReference type="PaxDb" id="321967-LSEI_1493"/>
<dbReference type="KEGG" id="lca:LSEI_1493"/>
<dbReference type="PATRIC" id="fig|321967.11.peg.1474"/>
<dbReference type="HOGENOM" id="CLU_065515_0_0_9"/>
<dbReference type="Proteomes" id="UP000001651">
    <property type="component" value="Chromosome"/>
</dbReference>
<dbReference type="GO" id="GO:0005737">
    <property type="term" value="C:cytoplasm"/>
    <property type="evidence" value="ECO:0007669"/>
    <property type="project" value="UniProtKB-SubCell"/>
</dbReference>
<dbReference type="GO" id="GO:0010181">
    <property type="term" value="F:FMN binding"/>
    <property type="evidence" value="ECO:0007669"/>
    <property type="project" value="UniProtKB-UniRule"/>
</dbReference>
<dbReference type="GO" id="GO:0004452">
    <property type="term" value="F:isopentenyl-diphosphate delta-isomerase activity"/>
    <property type="evidence" value="ECO:0007669"/>
    <property type="project" value="UniProtKB-UniRule"/>
</dbReference>
<dbReference type="GO" id="GO:0000287">
    <property type="term" value="F:magnesium ion binding"/>
    <property type="evidence" value="ECO:0007669"/>
    <property type="project" value="UniProtKB-UniRule"/>
</dbReference>
<dbReference type="GO" id="GO:0070402">
    <property type="term" value="F:NADPH binding"/>
    <property type="evidence" value="ECO:0007669"/>
    <property type="project" value="UniProtKB-UniRule"/>
</dbReference>
<dbReference type="GO" id="GO:0016491">
    <property type="term" value="F:oxidoreductase activity"/>
    <property type="evidence" value="ECO:0007669"/>
    <property type="project" value="InterPro"/>
</dbReference>
<dbReference type="GO" id="GO:0008299">
    <property type="term" value="P:isoprenoid biosynthetic process"/>
    <property type="evidence" value="ECO:0007669"/>
    <property type="project" value="UniProtKB-UniRule"/>
</dbReference>
<dbReference type="CDD" id="cd02811">
    <property type="entry name" value="IDI-2_FMN"/>
    <property type="match status" value="1"/>
</dbReference>
<dbReference type="Gene3D" id="3.20.20.70">
    <property type="entry name" value="Aldolase class I"/>
    <property type="match status" value="1"/>
</dbReference>
<dbReference type="HAMAP" id="MF_00354">
    <property type="entry name" value="Idi_2"/>
    <property type="match status" value="1"/>
</dbReference>
<dbReference type="InterPro" id="IPR013785">
    <property type="entry name" value="Aldolase_TIM"/>
</dbReference>
<dbReference type="InterPro" id="IPR000262">
    <property type="entry name" value="FMN-dep_DH"/>
</dbReference>
<dbReference type="InterPro" id="IPR011179">
    <property type="entry name" value="IPdP_isomerase"/>
</dbReference>
<dbReference type="NCBIfam" id="TIGR02151">
    <property type="entry name" value="IPP_isom_2"/>
    <property type="match status" value="1"/>
</dbReference>
<dbReference type="PANTHER" id="PTHR43665">
    <property type="entry name" value="ISOPENTENYL-DIPHOSPHATE DELTA-ISOMERASE"/>
    <property type="match status" value="1"/>
</dbReference>
<dbReference type="PANTHER" id="PTHR43665:SF1">
    <property type="entry name" value="ISOPENTENYL-DIPHOSPHATE DELTA-ISOMERASE"/>
    <property type="match status" value="1"/>
</dbReference>
<dbReference type="Pfam" id="PF01070">
    <property type="entry name" value="FMN_dh"/>
    <property type="match status" value="1"/>
</dbReference>
<dbReference type="PIRSF" id="PIRSF003314">
    <property type="entry name" value="IPP_isomerase"/>
    <property type="match status" value="1"/>
</dbReference>
<dbReference type="SUPFAM" id="SSF51395">
    <property type="entry name" value="FMN-linked oxidoreductases"/>
    <property type="match status" value="1"/>
</dbReference>
<accession>Q038V3</accession>
<sequence length="344" mass="37437">MTQSQQSHRKDEHVFLAEKYFQSVAHAGFDQVRLLHRALPETTMAAVDLKPDLPFNWQWPIYINAMTGGSPQTGKLNAQLGQLAQALGVAIASGSQSVALRDPQLVPTFATLRDHDPNGFILANVGAGHHATAAEAAVAMLKANALEIHLNAAQEVVMPEGDRDFMWQANIKSIIATSQVPIVVKEVGNGFIREDLQSLQQLGVQFVDVGGRGGTNFATIENARRSGHDFAYLQDWGQTTVESLLEARGLGLTMLATGGVRSPLDVVKALRLGAHAVGMSGMVLHHLIQTGYEATLAYFQNFLHQLRQLYALLGVTNWQELQEAPIVLSADLEHYRQARGLPGI</sequence>
<keyword id="KW-0963">Cytoplasm</keyword>
<keyword id="KW-0285">Flavoprotein</keyword>
<keyword id="KW-0288">FMN</keyword>
<keyword id="KW-0413">Isomerase</keyword>
<keyword id="KW-0414">Isoprene biosynthesis</keyword>
<keyword id="KW-0460">Magnesium</keyword>
<keyword id="KW-0479">Metal-binding</keyword>
<keyword id="KW-0521">NADP</keyword>
<keyword id="KW-1185">Reference proteome</keyword>
<gene>
    <name evidence="1" type="primary">fni</name>
    <name type="ordered locus">LSEI_1493</name>
</gene>
<proteinExistence type="inferred from homology"/>
<reference key="1">
    <citation type="journal article" date="2006" name="Proc. Natl. Acad. Sci. U.S.A.">
        <title>Comparative genomics of the lactic acid bacteria.</title>
        <authorList>
            <person name="Makarova K.S."/>
            <person name="Slesarev A."/>
            <person name="Wolf Y.I."/>
            <person name="Sorokin A."/>
            <person name="Mirkin B."/>
            <person name="Koonin E.V."/>
            <person name="Pavlov A."/>
            <person name="Pavlova N."/>
            <person name="Karamychev V."/>
            <person name="Polouchine N."/>
            <person name="Shakhova V."/>
            <person name="Grigoriev I."/>
            <person name="Lou Y."/>
            <person name="Rohksar D."/>
            <person name="Lucas S."/>
            <person name="Huang K."/>
            <person name="Goodstein D.M."/>
            <person name="Hawkins T."/>
            <person name="Plengvidhya V."/>
            <person name="Welker D."/>
            <person name="Hughes J."/>
            <person name="Goh Y."/>
            <person name="Benson A."/>
            <person name="Baldwin K."/>
            <person name="Lee J.-H."/>
            <person name="Diaz-Muniz I."/>
            <person name="Dosti B."/>
            <person name="Smeianov V."/>
            <person name="Wechter W."/>
            <person name="Barabote R."/>
            <person name="Lorca G."/>
            <person name="Altermann E."/>
            <person name="Barrangou R."/>
            <person name="Ganesan B."/>
            <person name="Xie Y."/>
            <person name="Rawsthorne H."/>
            <person name="Tamir D."/>
            <person name="Parker C."/>
            <person name="Breidt F."/>
            <person name="Broadbent J.R."/>
            <person name="Hutkins R."/>
            <person name="O'Sullivan D."/>
            <person name="Steele J."/>
            <person name="Unlu G."/>
            <person name="Saier M.H. Jr."/>
            <person name="Klaenhammer T."/>
            <person name="Richardson P."/>
            <person name="Kozyavkin S."/>
            <person name="Weimer B.C."/>
            <person name="Mills D.A."/>
        </authorList>
    </citation>
    <scope>NUCLEOTIDE SEQUENCE [LARGE SCALE GENOMIC DNA]</scope>
    <source>
        <strain>ATCC 334 / BCRC 17002 / CCUG 31169 / CIP 107868 / KCTC 3260 / NRRL B-441</strain>
    </source>
</reference>
<feature type="chain" id="PRO_1000048440" description="Isopentenyl-diphosphate delta-isomerase">
    <location>
        <begin position="1"/>
        <end position="344"/>
    </location>
</feature>
<feature type="binding site" evidence="1">
    <location>
        <begin position="9"/>
        <end position="10"/>
    </location>
    <ligand>
        <name>substrate</name>
    </ligand>
</feature>
<feature type="binding site" evidence="1">
    <location>
        <begin position="65"/>
        <end position="67"/>
    </location>
    <ligand>
        <name>FMN</name>
        <dbReference type="ChEBI" id="CHEBI:58210"/>
    </ligand>
</feature>
<feature type="binding site" evidence="1">
    <location>
        <position position="95"/>
    </location>
    <ligand>
        <name>FMN</name>
        <dbReference type="ChEBI" id="CHEBI:58210"/>
    </ligand>
</feature>
<feature type="binding site" evidence="1">
    <location>
        <position position="124"/>
    </location>
    <ligand>
        <name>FMN</name>
        <dbReference type="ChEBI" id="CHEBI:58210"/>
    </ligand>
</feature>
<feature type="binding site" evidence="1">
    <location>
        <position position="154"/>
    </location>
    <ligand>
        <name>substrate</name>
    </ligand>
</feature>
<feature type="binding site" evidence="1">
    <location>
        <position position="155"/>
    </location>
    <ligand>
        <name>Mg(2+)</name>
        <dbReference type="ChEBI" id="CHEBI:18420"/>
    </ligand>
</feature>
<feature type="binding site" evidence="1">
    <location>
        <position position="185"/>
    </location>
    <ligand>
        <name>FMN</name>
        <dbReference type="ChEBI" id="CHEBI:58210"/>
    </ligand>
</feature>
<feature type="binding site" evidence="1">
    <location>
        <position position="215"/>
    </location>
    <ligand>
        <name>FMN</name>
        <dbReference type="ChEBI" id="CHEBI:58210"/>
    </ligand>
</feature>
<feature type="binding site" evidence="1">
    <location>
        <begin position="259"/>
        <end position="261"/>
    </location>
    <ligand>
        <name>FMN</name>
        <dbReference type="ChEBI" id="CHEBI:58210"/>
    </ligand>
</feature>
<feature type="binding site" evidence="1">
    <location>
        <begin position="280"/>
        <end position="281"/>
    </location>
    <ligand>
        <name>FMN</name>
        <dbReference type="ChEBI" id="CHEBI:58210"/>
    </ligand>
</feature>
<organism>
    <name type="scientific">Lacticaseibacillus paracasei (strain ATCC 334 / BCRC 17002 / CCUG 31169 / CIP 107868 / KCTC 3260 / NRRL B-441)</name>
    <name type="common">Lactobacillus paracasei</name>
    <dbReference type="NCBI Taxonomy" id="321967"/>
    <lineage>
        <taxon>Bacteria</taxon>
        <taxon>Bacillati</taxon>
        <taxon>Bacillota</taxon>
        <taxon>Bacilli</taxon>
        <taxon>Lactobacillales</taxon>
        <taxon>Lactobacillaceae</taxon>
        <taxon>Lacticaseibacillus</taxon>
    </lineage>
</organism>
<name>IDI2_LACP3</name>